<feature type="chain" id="PRO_0000315087" description="UDP-N-acetylglucosamine--N-acetylmuramyl-(pentapeptide) pyrophosphoryl-undecaprenol N-acetylglucosamine transferase">
    <location>
        <begin position="1"/>
        <end position="356"/>
    </location>
</feature>
<feature type="binding site" evidence="1">
    <location>
        <begin position="10"/>
        <end position="12"/>
    </location>
    <ligand>
        <name>UDP-N-acetyl-alpha-D-glucosamine</name>
        <dbReference type="ChEBI" id="CHEBI:57705"/>
    </ligand>
</feature>
<feature type="binding site" evidence="1">
    <location>
        <position position="123"/>
    </location>
    <ligand>
        <name>UDP-N-acetyl-alpha-D-glucosamine</name>
        <dbReference type="ChEBI" id="CHEBI:57705"/>
    </ligand>
</feature>
<feature type="binding site" evidence="1">
    <location>
        <position position="159"/>
    </location>
    <ligand>
        <name>UDP-N-acetyl-alpha-D-glucosamine</name>
        <dbReference type="ChEBI" id="CHEBI:57705"/>
    </ligand>
</feature>
<feature type="binding site" evidence="1">
    <location>
        <position position="193"/>
    </location>
    <ligand>
        <name>UDP-N-acetyl-alpha-D-glucosamine</name>
        <dbReference type="ChEBI" id="CHEBI:57705"/>
    </ligand>
</feature>
<feature type="binding site" evidence="1">
    <location>
        <position position="240"/>
    </location>
    <ligand>
        <name>UDP-N-acetyl-alpha-D-glucosamine</name>
        <dbReference type="ChEBI" id="CHEBI:57705"/>
    </ligand>
</feature>
<feature type="binding site" evidence="1">
    <location>
        <position position="284"/>
    </location>
    <ligand>
        <name>UDP-N-acetyl-alpha-D-glucosamine</name>
        <dbReference type="ChEBI" id="CHEBI:57705"/>
    </ligand>
</feature>
<dbReference type="EC" id="2.4.1.227" evidence="1"/>
<dbReference type="EMBL" id="AP009044">
    <property type="protein sequence ID" value="BAF55039.1"/>
    <property type="status" value="ALT_INIT"/>
    <property type="molecule type" value="Genomic_DNA"/>
</dbReference>
<dbReference type="SMR" id="A4QFM3"/>
<dbReference type="CAZy" id="GT28">
    <property type="family name" value="Glycosyltransferase Family 28"/>
</dbReference>
<dbReference type="KEGG" id="cgt:cgR_2040"/>
<dbReference type="HOGENOM" id="CLU_037404_1_0_11"/>
<dbReference type="PhylomeDB" id="A4QFM3"/>
<dbReference type="UniPathway" id="UPA00219"/>
<dbReference type="Proteomes" id="UP000006698">
    <property type="component" value="Chromosome"/>
</dbReference>
<dbReference type="GO" id="GO:0005886">
    <property type="term" value="C:plasma membrane"/>
    <property type="evidence" value="ECO:0007669"/>
    <property type="project" value="UniProtKB-SubCell"/>
</dbReference>
<dbReference type="GO" id="GO:0051991">
    <property type="term" value="F:UDP-N-acetyl-D-glucosamine:N-acetylmuramoyl-L-alanyl-D-glutamyl-meso-2,6-diaminopimelyl-D-alanyl-D-alanine-diphosphoundecaprenol 4-beta-N-acetylglucosaminlytransferase activity"/>
    <property type="evidence" value="ECO:0007669"/>
    <property type="project" value="RHEA"/>
</dbReference>
<dbReference type="GO" id="GO:0050511">
    <property type="term" value="F:undecaprenyldiphospho-muramoylpentapeptide beta-N-acetylglucosaminyltransferase activity"/>
    <property type="evidence" value="ECO:0007669"/>
    <property type="project" value="UniProtKB-UniRule"/>
</dbReference>
<dbReference type="GO" id="GO:0005975">
    <property type="term" value="P:carbohydrate metabolic process"/>
    <property type="evidence" value="ECO:0007669"/>
    <property type="project" value="InterPro"/>
</dbReference>
<dbReference type="GO" id="GO:0051301">
    <property type="term" value="P:cell division"/>
    <property type="evidence" value="ECO:0007669"/>
    <property type="project" value="UniProtKB-KW"/>
</dbReference>
<dbReference type="GO" id="GO:0071555">
    <property type="term" value="P:cell wall organization"/>
    <property type="evidence" value="ECO:0007669"/>
    <property type="project" value="UniProtKB-KW"/>
</dbReference>
<dbReference type="GO" id="GO:0030259">
    <property type="term" value="P:lipid glycosylation"/>
    <property type="evidence" value="ECO:0007669"/>
    <property type="project" value="UniProtKB-UniRule"/>
</dbReference>
<dbReference type="GO" id="GO:0009252">
    <property type="term" value="P:peptidoglycan biosynthetic process"/>
    <property type="evidence" value="ECO:0007669"/>
    <property type="project" value="UniProtKB-UniRule"/>
</dbReference>
<dbReference type="GO" id="GO:0008360">
    <property type="term" value="P:regulation of cell shape"/>
    <property type="evidence" value="ECO:0007669"/>
    <property type="project" value="UniProtKB-KW"/>
</dbReference>
<dbReference type="CDD" id="cd03785">
    <property type="entry name" value="GT28_MurG"/>
    <property type="match status" value="1"/>
</dbReference>
<dbReference type="Gene3D" id="3.40.50.2000">
    <property type="entry name" value="Glycogen Phosphorylase B"/>
    <property type="match status" value="2"/>
</dbReference>
<dbReference type="HAMAP" id="MF_00033">
    <property type="entry name" value="MurG"/>
    <property type="match status" value="1"/>
</dbReference>
<dbReference type="InterPro" id="IPR006009">
    <property type="entry name" value="GlcNAc_MurG"/>
</dbReference>
<dbReference type="InterPro" id="IPR007235">
    <property type="entry name" value="Glyco_trans_28_C"/>
</dbReference>
<dbReference type="InterPro" id="IPR004276">
    <property type="entry name" value="GlycoTrans_28_N"/>
</dbReference>
<dbReference type="NCBIfam" id="TIGR01133">
    <property type="entry name" value="murG"/>
    <property type="match status" value="1"/>
</dbReference>
<dbReference type="PANTHER" id="PTHR21015:SF22">
    <property type="entry name" value="GLYCOSYLTRANSFERASE"/>
    <property type="match status" value="1"/>
</dbReference>
<dbReference type="PANTHER" id="PTHR21015">
    <property type="entry name" value="UDP-N-ACETYLGLUCOSAMINE--N-ACETYLMURAMYL-(PENTAPEPTIDE) PYROPHOSPHORYL-UNDECAPRENOL N-ACETYLGLUCOSAMINE TRANSFERASE 1"/>
    <property type="match status" value="1"/>
</dbReference>
<dbReference type="Pfam" id="PF04101">
    <property type="entry name" value="Glyco_tran_28_C"/>
    <property type="match status" value="1"/>
</dbReference>
<dbReference type="Pfam" id="PF03033">
    <property type="entry name" value="Glyco_transf_28"/>
    <property type="match status" value="1"/>
</dbReference>
<dbReference type="SUPFAM" id="SSF53756">
    <property type="entry name" value="UDP-Glycosyltransferase/glycogen phosphorylase"/>
    <property type="match status" value="1"/>
</dbReference>
<keyword id="KW-0131">Cell cycle</keyword>
<keyword id="KW-0132">Cell division</keyword>
<keyword id="KW-1003">Cell membrane</keyword>
<keyword id="KW-0133">Cell shape</keyword>
<keyword id="KW-0961">Cell wall biogenesis/degradation</keyword>
<keyword id="KW-0328">Glycosyltransferase</keyword>
<keyword id="KW-0472">Membrane</keyword>
<keyword id="KW-0573">Peptidoglycan synthesis</keyword>
<keyword id="KW-0808">Transferase</keyword>
<sequence>MRVVVAGGGTAGHIEPALAVAEALRDKHGATVSALGTARGLETTLVPDRGFELHLIEPVPVPRKPNMDLLKLPFRVAKALGQARKALKDTDAQAVIGFGGYVSAPAYMAAKSLGLPFFVHEANARAGMANKLGVKLGGVGLNAVAGSGMEGDVVGIPIRAVLSGARDESAADRARDTWGLDKDRQTIFVTGGSQGSVSINKAVEQAVDQLVEAGFQVLHAVGKKNELPAAKPGYHPVPFIDDMQAAYTVADLIVCRSGAMTVAEVTAAGVPAIYVPLPHGNGEQALNAQAVIKAGAARQIDDADFTAQTLIDATLDILLHPSTHQSMSDAAKTSTAGNASTVIADMIAATIKSQHN</sequence>
<protein>
    <recommendedName>
        <fullName evidence="1">UDP-N-acetylglucosamine--N-acetylmuramyl-(pentapeptide) pyrophosphoryl-undecaprenol N-acetylglucosamine transferase</fullName>
        <ecNumber evidence="1">2.4.1.227</ecNumber>
    </recommendedName>
    <alternativeName>
        <fullName evidence="1">Undecaprenyl-PP-MurNAc-pentapeptide-UDPGlcNAc GlcNAc transferase</fullName>
    </alternativeName>
</protein>
<gene>
    <name evidence="1" type="primary">murG</name>
    <name type="ordered locus">cgR_2040</name>
</gene>
<proteinExistence type="inferred from homology"/>
<accession>A4QFM3</accession>
<name>MURG_CORGB</name>
<reference key="1">
    <citation type="journal article" date="2007" name="Microbiology">
        <title>Comparative analysis of the Corynebacterium glutamicum group and complete genome sequence of strain R.</title>
        <authorList>
            <person name="Yukawa H."/>
            <person name="Omumasaba C.A."/>
            <person name="Nonaka H."/>
            <person name="Kos P."/>
            <person name="Okai N."/>
            <person name="Suzuki N."/>
            <person name="Suda M."/>
            <person name="Tsuge Y."/>
            <person name="Watanabe J."/>
            <person name="Ikeda Y."/>
            <person name="Vertes A.A."/>
            <person name="Inui M."/>
        </authorList>
    </citation>
    <scope>NUCLEOTIDE SEQUENCE [LARGE SCALE GENOMIC DNA]</scope>
    <source>
        <strain>R</strain>
    </source>
</reference>
<comment type="function">
    <text evidence="1">Cell wall formation. Catalyzes the transfer of a GlcNAc subunit on undecaprenyl-pyrophosphoryl-MurNAc-pentapeptide (lipid intermediate I) to form undecaprenyl-pyrophosphoryl-MurNAc-(pentapeptide)GlcNAc (lipid intermediate II).</text>
</comment>
<comment type="catalytic activity">
    <reaction evidence="1">
        <text>di-trans,octa-cis-undecaprenyl diphospho-N-acetyl-alpha-D-muramoyl-L-alanyl-D-glutamyl-meso-2,6-diaminopimeloyl-D-alanyl-D-alanine + UDP-N-acetyl-alpha-D-glucosamine = di-trans,octa-cis-undecaprenyl diphospho-[N-acetyl-alpha-D-glucosaminyl-(1-&gt;4)]-N-acetyl-alpha-D-muramoyl-L-alanyl-D-glutamyl-meso-2,6-diaminopimeloyl-D-alanyl-D-alanine + UDP + H(+)</text>
        <dbReference type="Rhea" id="RHEA:31227"/>
        <dbReference type="ChEBI" id="CHEBI:15378"/>
        <dbReference type="ChEBI" id="CHEBI:57705"/>
        <dbReference type="ChEBI" id="CHEBI:58223"/>
        <dbReference type="ChEBI" id="CHEBI:61387"/>
        <dbReference type="ChEBI" id="CHEBI:61388"/>
        <dbReference type="EC" id="2.4.1.227"/>
    </reaction>
</comment>
<comment type="pathway">
    <text evidence="1">Cell wall biogenesis; peptidoglycan biosynthesis.</text>
</comment>
<comment type="subcellular location">
    <subcellularLocation>
        <location evidence="1">Cell membrane</location>
        <topology evidence="1">Peripheral membrane protein</topology>
        <orientation evidence="1">Cytoplasmic side</orientation>
    </subcellularLocation>
</comment>
<comment type="similarity">
    <text evidence="1">Belongs to the glycosyltransferase 28 family. MurG subfamily.</text>
</comment>
<comment type="sequence caution" evidence="2">
    <conflict type="erroneous initiation">
        <sequence resource="EMBL-CDS" id="BAF55039"/>
    </conflict>
</comment>
<organism>
    <name type="scientific">Corynebacterium glutamicum (strain R)</name>
    <dbReference type="NCBI Taxonomy" id="340322"/>
    <lineage>
        <taxon>Bacteria</taxon>
        <taxon>Bacillati</taxon>
        <taxon>Actinomycetota</taxon>
        <taxon>Actinomycetes</taxon>
        <taxon>Mycobacteriales</taxon>
        <taxon>Corynebacteriaceae</taxon>
        <taxon>Corynebacterium</taxon>
    </lineage>
</organism>
<evidence type="ECO:0000255" key="1">
    <source>
        <dbReference type="HAMAP-Rule" id="MF_00033"/>
    </source>
</evidence>
<evidence type="ECO:0000305" key="2"/>